<name>MAEA_ARATH</name>
<gene>
    <name evidence="5" type="primary">MAEA</name>
    <name evidence="6" type="ordered locus">At3g55070</name>
    <name evidence="7" type="ORF">T15C9_70</name>
</gene>
<reference key="1">
    <citation type="journal article" date="2000" name="Nature">
        <title>Sequence and analysis of chromosome 3 of the plant Arabidopsis thaliana.</title>
        <authorList>
            <person name="Salanoubat M."/>
            <person name="Lemcke K."/>
            <person name="Rieger M."/>
            <person name="Ansorge W."/>
            <person name="Unseld M."/>
            <person name="Fartmann B."/>
            <person name="Valle G."/>
            <person name="Bloecker H."/>
            <person name="Perez-Alonso M."/>
            <person name="Obermaier B."/>
            <person name="Delseny M."/>
            <person name="Boutry M."/>
            <person name="Grivell L.A."/>
            <person name="Mache R."/>
            <person name="Puigdomenech P."/>
            <person name="De Simone V."/>
            <person name="Choisne N."/>
            <person name="Artiguenave F."/>
            <person name="Robert C."/>
            <person name="Brottier P."/>
            <person name="Wincker P."/>
            <person name="Cattolico L."/>
            <person name="Weissenbach J."/>
            <person name="Saurin W."/>
            <person name="Quetier F."/>
            <person name="Schaefer M."/>
            <person name="Mueller-Auer S."/>
            <person name="Gabel C."/>
            <person name="Fuchs M."/>
            <person name="Benes V."/>
            <person name="Wurmbach E."/>
            <person name="Drzonek H."/>
            <person name="Erfle H."/>
            <person name="Jordan N."/>
            <person name="Bangert S."/>
            <person name="Wiedelmann R."/>
            <person name="Kranz H."/>
            <person name="Voss H."/>
            <person name="Holland R."/>
            <person name="Brandt P."/>
            <person name="Nyakatura G."/>
            <person name="Vezzi A."/>
            <person name="D'Angelo M."/>
            <person name="Pallavicini A."/>
            <person name="Toppo S."/>
            <person name="Simionati B."/>
            <person name="Conrad A."/>
            <person name="Hornischer K."/>
            <person name="Kauer G."/>
            <person name="Loehnert T.-H."/>
            <person name="Nordsiek G."/>
            <person name="Reichelt J."/>
            <person name="Scharfe M."/>
            <person name="Schoen O."/>
            <person name="Bargues M."/>
            <person name="Terol J."/>
            <person name="Climent J."/>
            <person name="Navarro P."/>
            <person name="Collado C."/>
            <person name="Perez-Perez A."/>
            <person name="Ottenwaelder B."/>
            <person name="Duchemin D."/>
            <person name="Cooke R."/>
            <person name="Laudie M."/>
            <person name="Berger-Llauro C."/>
            <person name="Purnelle B."/>
            <person name="Masuy D."/>
            <person name="de Haan M."/>
            <person name="Maarse A.C."/>
            <person name="Alcaraz J.-P."/>
            <person name="Cottet A."/>
            <person name="Casacuberta E."/>
            <person name="Monfort A."/>
            <person name="Argiriou A."/>
            <person name="Flores M."/>
            <person name="Liguori R."/>
            <person name="Vitale D."/>
            <person name="Mannhaupt G."/>
            <person name="Haase D."/>
            <person name="Schoof H."/>
            <person name="Rudd S."/>
            <person name="Zaccaria P."/>
            <person name="Mewes H.-W."/>
            <person name="Mayer K.F.X."/>
            <person name="Kaul S."/>
            <person name="Town C.D."/>
            <person name="Koo H.L."/>
            <person name="Tallon L.J."/>
            <person name="Jenkins J."/>
            <person name="Rooney T."/>
            <person name="Rizzo M."/>
            <person name="Walts A."/>
            <person name="Utterback T."/>
            <person name="Fujii C.Y."/>
            <person name="Shea T.P."/>
            <person name="Creasy T.H."/>
            <person name="Haas B."/>
            <person name="Maiti R."/>
            <person name="Wu D."/>
            <person name="Peterson J."/>
            <person name="Van Aken S."/>
            <person name="Pai G."/>
            <person name="Militscher J."/>
            <person name="Sellers P."/>
            <person name="Gill J.E."/>
            <person name="Feldblyum T.V."/>
            <person name="Preuss D."/>
            <person name="Lin X."/>
            <person name="Nierman W.C."/>
            <person name="Salzberg S.L."/>
            <person name="White O."/>
            <person name="Venter J.C."/>
            <person name="Fraser C.M."/>
            <person name="Kaneko T."/>
            <person name="Nakamura Y."/>
            <person name="Sato S."/>
            <person name="Kato T."/>
            <person name="Asamizu E."/>
            <person name="Sasamoto S."/>
            <person name="Kimura T."/>
            <person name="Idesawa K."/>
            <person name="Kawashima K."/>
            <person name="Kishida Y."/>
            <person name="Kiyokawa C."/>
            <person name="Kohara M."/>
            <person name="Matsumoto M."/>
            <person name="Matsuno A."/>
            <person name="Muraki A."/>
            <person name="Nakayama S."/>
            <person name="Nakazaki N."/>
            <person name="Shinpo S."/>
            <person name="Takeuchi C."/>
            <person name="Wada T."/>
            <person name="Watanabe A."/>
            <person name="Yamada M."/>
            <person name="Yasuda M."/>
            <person name="Tabata S."/>
        </authorList>
    </citation>
    <scope>NUCLEOTIDE SEQUENCE [LARGE SCALE GENOMIC DNA]</scope>
    <source>
        <strain>cv. Columbia</strain>
    </source>
</reference>
<reference key="2">
    <citation type="journal article" date="2017" name="Plant J.">
        <title>Araport11: a complete reannotation of the Arabidopsis thaliana reference genome.</title>
        <authorList>
            <person name="Cheng C.Y."/>
            <person name="Krishnakumar V."/>
            <person name="Chan A.P."/>
            <person name="Thibaud-Nissen F."/>
            <person name="Schobel S."/>
            <person name="Town C.D."/>
        </authorList>
    </citation>
    <scope>GENOME REANNOTATION</scope>
    <source>
        <strain>cv. Columbia</strain>
    </source>
</reference>
<reference key="3">
    <citation type="journal article" date="2003" name="Science">
        <title>Empirical analysis of transcriptional activity in the Arabidopsis genome.</title>
        <authorList>
            <person name="Yamada K."/>
            <person name="Lim J."/>
            <person name="Dale J.M."/>
            <person name="Chen H."/>
            <person name="Shinn P."/>
            <person name="Palm C.J."/>
            <person name="Southwick A.M."/>
            <person name="Wu H.C."/>
            <person name="Kim C.J."/>
            <person name="Nguyen M."/>
            <person name="Pham P.K."/>
            <person name="Cheuk R.F."/>
            <person name="Karlin-Newmann G."/>
            <person name="Liu S.X."/>
            <person name="Lam B."/>
            <person name="Sakano H."/>
            <person name="Wu T."/>
            <person name="Yu G."/>
            <person name="Miranda M."/>
            <person name="Quach H.L."/>
            <person name="Tripp M."/>
            <person name="Chang C.H."/>
            <person name="Lee J.M."/>
            <person name="Toriumi M.J."/>
            <person name="Chan M.M."/>
            <person name="Tang C.C."/>
            <person name="Onodera C.S."/>
            <person name="Deng J.M."/>
            <person name="Akiyama K."/>
            <person name="Ansari Y."/>
            <person name="Arakawa T."/>
            <person name="Banh J."/>
            <person name="Banno F."/>
            <person name="Bowser L."/>
            <person name="Brooks S.Y."/>
            <person name="Carninci P."/>
            <person name="Chao Q."/>
            <person name="Choy N."/>
            <person name="Enju A."/>
            <person name="Goldsmith A.D."/>
            <person name="Gurjal M."/>
            <person name="Hansen N.F."/>
            <person name="Hayashizaki Y."/>
            <person name="Johnson-Hopson C."/>
            <person name="Hsuan V.W."/>
            <person name="Iida K."/>
            <person name="Karnes M."/>
            <person name="Khan S."/>
            <person name="Koesema E."/>
            <person name="Ishida J."/>
            <person name="Jiang P.X."/>
            <person name="Jones T."/>
            <person name="Kawai J."/>
            <person name="Kamiya A."/>
            <person name="Meyers C."/>
            <person name="Nakajima M."/>
            <person name="Narusaka M."/>
            <person name="Seki M."/>
            <person name="Sakurai T."/>
            <person name="Satou M."/>
            <person name="Tamse R."/>
            <person name="Vaysberg M."/>
            <person name="Wallender E.K."/>
            <person name="Wong C."/>
            <person name="Yamamura Y."/>
            <person name="Yuan S."/>
            <person name="Shinozaki K."/>
            <person name="Davis R.W."/>
            <person name="Theologis A."/>
            <person name="Ecker J.R."/>
        </authorList>
    </citation>
    <scope>NUCLEOTIDE SEQUENCE [LARGE SCALE MRNA]</scope>
    <source>
        <strain>cv. Columbia</strain>
    </source>
</reference>
<reference key="4">
    <citation type="submission" date="2006-08" db="EMBL/GenBank/DDBJ databases">
        <title>Arabidopsis ORF Clones.</title>
        <authorList>
            <person name="Quinitio C."/>
            <person name="Chen H."/>
            <person name="Kim C.J."/>
            <person name="Shinn P."/>
            <person name="Ecker J.R."/>
        </authorList>
    </citation>
    <scope>NUCLEOTIDE SEQUENCE [LARGE SCALE MRNA]</scope>
    <source>
        <strain>cv. Columbia</strain>
    </source>
</reference>
<reference key="5">
    <citation type="submission" date="2005-03" db="EMBL/GenBank/DDBJ databases">
        <title>Large-scale analysis of RIKEN Arabidopsis full-length (RAFL) cDNAs.</title>
        <authorList>
            <person name="Totoki Y."/>
            <person name="Seki M."/>
            <person name="Ishida J."/>
            <person name="Nakajima M."/>
            <person name="Enju A."/>
            <person name="Kamiya A."/>
            <person name="Narusaka M."/>
            <person name="Shin-i T."/>
            <person name="Nakagawa M."/>
            <person name="Sakamoto N."/>
            <person name="Oishi K."/>
            <person name="Kohara Y."/>
            <person name="Kobayashi M."/>
            <person name="Toyoda A."/>
            <person name="Sakaki Y."/>
            <person name="Sakurai T."/>
            <person name="Iida K."/>
            <person name="Akiyama K."/>
            <person name="Satou M."/>
            <person name="Toyoda T."/>
            <person name="Konagaya A."/>
            <person name="Carninci P."/>
            <person name="Kawai J."/>
            <person name="Hayashizaki Y."/>
            <person name="Shinozaki K."/>
        </authorList>
    </citation>
    <scope>NUCLEOTIDE SEQUENCE [LARGE SCALE MRNA] OF 234-418</scope>
    <source>
        <strain>cv. Columbia</strain>
    </source>
</reference>
<reference key="6">
    <citation type="journal article" date="2012" name="BMC Plant Biol.">
        <title>Interactions of an Arabidopsis RanBPM homologue with LisH-CTLH domain proteins revealed high conservation of CTLH complexes in eukaryotes.</title>
        <authorList>
            <person name="Tomastikova E."/>
            <person name="Cenklova V."/>
            <person name="Kohoutova L."/>
            <person name="Petrovska B."/>
            <person name="Vachova L."/>
            <person name="Halada P."/>
            <person name="Kocarova G."/>
            <person name="Binarova P."/>
        </authorList>
    </citation>
    <scope>IDENTIFICATION BY MASS SPECTROMETRY</scope>
    <scope>INTERACTION WITH RANBPM</scope>
    <scope>SUBCELLULAR LOCATION</scope>
</reference>
<keyword id="KW-0963">Cytoplasm</keyword>
<keyword id="KW-0479">Metal-binding</keyword>
<keyword id="KW-1185">Reference proteome</keyword>
<keyword id="KW-0862">Zinc</keyword>
<keyword id="KW-0863">Zinc-finger</keyword>
<feature type="chain" id="PRO_0000442061" description="Protein MAEA homolog">
    <location>
        <begin position="1"/>
        <end position="418"/>
    </location>
</feature>
<feature type="domain" description="LisH" evidence="2">
    <location>
        <begin position="141"/>
        <end position="173"/>
    </location>
</feature>
<feature type="domain" description="CTLH" evidence="1">
    <location>
        <begin position="179"/>
        <end position="236"/>
    </location>
</feature>
<feature type="zinc finger region" description="RING-Gid-type" evidence="3">
    <location>
        <begin position="330"/>
        <end position="403"/>
    </location>
</feature>
<sequence>MEIDSATNGNSDTVMTESAATITPSPVVVSSSRSNQFTESLKLEHQLLRVPFEHYKKTIRTNHRSFEKEVSTIVNGVGELADSDWSKDDTVSRLTCLVTRLQGLKRKLEEGSNVENLQAQRCRARIDHLDSVDVENITEWNNTKLKRILVDYMLRMSYFETATKLSESSNIMDLVDIDIFREAKKVIDALKNREVASALTWCADNKTRLKKSKSKFEFQLRLQEFIELVRVDTAESYKKAIQYARKHLASWGTTHMKELQHVLATLAFKSTTECSKYKVLFELRQWDVLVDQFKQEFCKLYGMTMEPLLNIYLQAGLSALKTPYGLEEGCTKEDPLSQENFRKLALPLPFSKQHHSKLVCYISKELMDTENPPQVLPNGYVYSTKALKEMAEKNGGKITCPRTGLVCNYTELVKAYIS</sequence>
<accession>Q9M2V9</accession>
<accession>Q56WP4</accession>
<accession>Q94A50</accession>
<comment type="subunit">
    <text evidence="4">Interacts with RANBPM.</text>
</comment>
<comment type="subcellular location">
    <subcellularLocation>
        <location evidence="4">Cytoplasm</location>
    </subcellularLocation>
    <text evidence="4">Associates predominantly in the form of large cytoplasmic complexes.</text>
</comment>
<comment type="sequence caution" evidence="5">
    <conflict type="frameshift">
        <sequence resource="EMBL-CDS" id="AAK91389"/>
    </conflict>
</comment>
<comment type="sequence caution" evidence="5">
    <conflict type="erroneous initiation">
        <sequence resource="EMBL-CDS" id="BAD94564"/>
    </conflict>
    <text>Truncated N-terminus.</text>
</comment>
<dbReference type="EMBL" id="AL132970">
    <property type="protein sequence ID" value="CAB82702.1"/>
    <property type="molecule type" value="Genomic_DNA"/>
</dbReference>
<dbReference type="EMBL" id="CP002686">
    <property type="protein sequence ID" value="AEE79335.1"/>
    <property type="molecule type" value="Genomic_DNA"/>
</dbReference>
<dbReference type="EMBL" id="AY050371">
    <property type="protein sequence ID" value="AAK91389.1"/>
    <property type="status" value="ALT_FRAME"/>
    <property type="molecule type" value="mRNA"/>
</dbReference>
<dbReference type="EMBL" id="BT026476">
    <property type="protein sequence ID" value="ABH04583.1"/>
    <property type="molecule type" value="mRNA"/>
</dbReference>
<dbReference type="EMBL" id="AK221991">
    <property type="protein sequence ID" value="BAD94564.1"/>
    <property type="status" value="ALT_INIT"/>
    <property type="molecule type" value="mRNA"/>
</dbReference>
<dbReference type="PIR" id="T47646">
    <property type="entry name" value="T47646"/>
</dbReference>
<dbReference type="RefSeq" id="NP_191067.1">
    <property type="nucleotide sequence ID" value="NM_115365.2"/>
</dbReference>
<dbReference type="SMR" id="Q9M2V9"/>
<dbReference type="FunCoup" id="Q9M2V9">
    <property type="interactions" value="4337"/>
</dbReference>
<dbReference type="STRING" id="3702.Q9M2V9"/>
<dbReference type="iPTMnet" id="Q9M2V9"/>
<dbReference type="PaxDb" id="3702-AT3G55070.1"/>
<dbReference type="ProteomicsDB" id="238232"/>
<dbReference type="EnsemblPlants" id="AT3G55070.1">
    <property type="protein sequence ID" value="AT3G55070.1"/>
    <property type="gene ID" value="AT3G55070"/>
</dbReference>
<dbReference type="GeneID" id="824673"/>
<dbReference type="Gramene" id="AT3G55070.1">
    <property type="protein sequence ID" value="AT3G55070.1"/>
    <property type="gene ID" value="AT3G55070"/>
</dbReference>
<dbReference type="KEGG" id="ath:AT3G55070"/>
<dbReference type="Araport" id="AT3G55070"/>
<dbReference type="TAIR" id="AT3G55070"/>
<dbReference type="eggNOG" id="KOG0396">
    <property type="taxonomic scope" value="Eukaryota"/>
</dbReference>
<dbReference type="HOGENOM" id="CLU_027445_2_0_1"/>
<dbReference type="InParanoid" id="Q9M2V9"/>
<dbReference type="OMA" id="ANHETAR"/>
<dbReference type="PhylomeDB" id="Q9M2V9"/>
<dbReference type="PRO" id="PR:Q9M2V9"/>
<dbReference type="Proteomes" id="UP000006548">
    <property type="component" value="Chromosome 3"/>
</dbReference>
<dbReference type="ExpressionAtlas" id="Q9M2V9">
    <property type="expression patterns" value="baseline and differential"/>
</dbReference>
<dbReference type="GO" id="GO:0005737">
    <property type="term" value="C:cytoplasm"/>
    <property type="evidence" value="ECO:0000314"/>
    <property type="project" value="UniProtKB"/>
</dbReference>
<dbReference type="GO" id="GO:0061630">
    <property type="term" value="F:ubiquitin protein ligase activity"/>
    <property type="evidence" value="ECO:0007669"/>
    <property type="project" value="InterPro"/>
</dbReference>
<dbReference type="GO" id="GO:0008270">
    <property type="term" value="F:zinc ion binding"/>
    <property type="evidence" value="ECO:0007669"/>
    <property type="project" value="UniProtKB-KW"/>
</dbReference>
<dbReference type="GO" id="GO:0043161">
    <property type="term" value="P:proteasome-mediated ubiquitin-dependent protein catabolic process"/>
    <property type="evidence" value="ECO:0007669"/>
    <property type="project" value="InterPro"/>
</dbReference>
<dbReference type="CDD" id="cd16659">
    <property type="entry name" value="RING-Ubox_Emp"/>
    <property type="match status" value="1"/>
</dbReference>
<dbReference type="Gene3D" id="3.30.40.10">
    <property type="entry name" value="Zinc/RING finger domain, C3HC4 (zinc finger)"/>
    <property type="match status" value="1"/>
</dbReference>
<dbReference type="InterPro" id="IPR013144">
    <property type="entry name" value="CRA_dom"/>
</dbReference>
<dbReference type="InterPro" id="IPR024964">
    <property type="entry name" value="CTLH/CRA"/>
</dbReference>
<dbReference type="InterPro" id="IPR006595">
    <property type="entry name" value="CTLH_C"/>
</dbReference>
<dbReference type="InterPro" id="IPR045098">
    <property type="entry name" value="Fyv10_fam"/>
</dbReference>
<dbReference type="InterPro" id="IPR006594">
    <property type="entry name" value="LisH"/>
</dbReference>
<dbReference type="InterPro" id="IPR044063">
    <property type="entry name" value="ZF_RING_GID"/>
</dbReference>
<dbReference type="InterPro" id="IPR027370">
    <property type="entry name" value="Znf-RING_euk"/>
</dbReference>
<dbReference type="InterPro" id="IPR013083">
    <property type="entry name" value="Znf_RING/FYVE/PHD"/>
</dbReference>
<dbReference type="PANTHER" id="PTHR12170:SF2">
    <property type="entry name" value="E3 UBIQUITIN-PROTEIN TRANSFERASE MAEA"/>
    <property type="match status" value="1"/>
</dbReference>
<dbReference type="PANTHER" id="PTHR12170">
    <property type="entry name" value="MACROPHAGE ERYTHROBLAST ATTACHER-RELATED"/>
    <property type="match status" value="1"/>
</dbReference>
<dbReference type="Pfam" id="PF10607">
    <property type="entry name" value="CTLH"/>
    <property type="match status" value="1"/>
</dbReference>
<dbReference type="Pfam" id="PF13445">
    <property type="entry name" value="zf-RING_UBOX"/>
    <property type="match status" value="1"/>
</dbReference>
<dbReference type="SMART" id="SM00757">
    <property type="entry name" value="CRA"/>
    <property type="match status" value="1"/>
</dbReference>
<dbReference type="SMART" id="SM00668">
    <property type="entry name" value="CTLH"/>
    <property type="match status" value="1"/>
</dbReference>
<dbReference type="SUPFAM" id="SSF57850">
    <property type="entry name" value="RING/U-box"/>
    <property type="match status" value="1"/>
</dbReference>
<dbReference type="PROSITE" id="PS50897">
    <property type="entry name" value="CTLH"/>
    <property type="match status" value="1"/>
</dbReference>
<dbReference type="PROSITE" id="PS50896">
    <property type="entry name" value="LISH"/>
    <property type="match status" value="1"/>
</dbReference>
<dbReference type="PROSITE" id="PS51867">
    <property type="entry name" value="ZF_RING_GID"/>
    <property type="match status" value="1"/>
</dbReference>
<protein>
    <recommendedName>
        <fullName evidence="5">Protein MAEA homolog</fullName>
    </recommendedName>
</protein>
<evidence type="ECO:0000255" key="1">
    <source>
        <dbReference type="PROSITE-ProRule" id="PRU00058"/>
    </source>
</evidence>
<evidence type="ECO:0000255" key="2">
    <source>
        <dbReference type="PROSITE-ProRule" id="PRU00126"/>
    </source>
</evidence>
<evidence type="ECO:0000255" key="3">
    <source>
        <dbReference type="PROSITE-ProRule" id="PRU01215"/>
    </source>
</evidence>
<evidence type="ECO:0000269" key="4">
    <source>
    </source>
</evidence>
<evidence type="ECO:0000305" key="5"/>
<evidence type="ECO:0000312" key="6">
    <source>
        <dbReference type="Araport" id="AT3G55070"/>
    </source>
</evidence>
<evidence type="ECO:0000312" key="7">
    <source>
        <dbReference type="EMBL" id="CAB82702.1"/>
    </source>
</evidence>
<proteinExistence type="evidence at protein level"/>
<organism>
    <name type="scientific">Arabidopsis thaliana</name>
    <name type="common">Mouse-ear cress</name>
    <dbReference type="NCBI Taxonomy" id="3702"/>
    <lineage>
        <taxon>Eukaryota</taxon>
        <taxon>Viridiplantae</taxon>
        <taxon>Streptophyta</taxon>
        <taxon>Embryophyta</taxon>
        <taxon>Tracheophyta</taxon>
        <taxon>Spermatophyta</taxon>
        <taxon>Magnoliopsida</taxon>
        <taxon>eudicotyledons</taxon>
        <taxon>Gunneridae</taxon>
        <taxon>Pentapetalae</taxon>
        <taxon>rosids</taxon>
        <taxon>malvids</taxon>
        <taxon>Brassicales</taxon>
        <taxon>Brassicaceae</taxon>
        <taxon>Camelineae</taxon>
        <taxon>Arabidopsis</taxon>
    </lineage>
</organism>